<keyword id="KW-0025">Alternative splicing</keyword>
<keyword id="KW-1185">Reference proteome</keyword>
<keyword id="KW-0727">SH2 domain</keyword>
<sequence>MIMQDIRLRLEPQHSKATFISSSSASSSSSQTAETTLIETAEKSPASEAAAGTVTTTSPQHFFHHHHPPAHPHPPRQQPHPHSHSHPHPHPQLQRRPVEQLHLLHSHHDVQELSGQEHPHPQPGSHPHPHHLRSPSSEEDNSPTEMNNCRRLVDKPPLVKRLTMGIGLLRGTEDSRPLMHSTCGSSLTSGSGCGSTQTISDGYVNEAICEPDKYVASKFGDSCRQSLSALESATQRLQVELPAASKKYLRETCSANSSPKLFPGHSALRLDNLSLAEQQELKGAAWFQAGIPREISLEALSRQSPGAFLVRQSSTKPGCFALSLRVPPPSPRVAHYLILRTQRGYKIKGFTKEFSSLKALITHHSVMPELLPVPLTLPRPPSTRSQRSQGAYAGGTGNGGADFEMYGSLNDFRKMMADLNV</sequence>
<protein>
    <recommendedName>
        <fullName evidence="4">EGFR adapter protein</fullName>
    </recommendedName>
</protein>
<name>EGRAP_DROME</name>
<accession>Q6NR09</accession>
<accession>Q29QP1</accession>
<gene>
    <name evidence="4 8" type="primary">Egfrap</name>
    <name evidence="8" type="ORF">CG33993</name>
</gene>
<evidence type="ECO:0000255" key="1">
    <source>
        <dbReference type="PROSITE-ProRule" id="PRU00191"/>
    </source>
</evidence>
<evidence type="ECO:0000256" key="2">
    <source>
        <dbReference type="SAM" id="MobiDB-lite"/>
    </source>
</evidence>
<evidence type="ECO:0000269" key="3">
    <source>
    </source>
</evidence>
<evidence type="ECO:0000303" key="4">
    <source>
    </source>
</evidence>
<evidence type="ECO:0000305" key="5"/>
<evidence type="ECO:0000312" key="6">
    <source>
        <dbReference type="EMBL" id="AAQ23593.1"/>
    </source>
</evidence>
<evidence type="ECO:0000312" key="7">
    <source>
        <dbReference type="EMBL" id="ABC66161.1"/>
    </source>
</evidence>
<evidence type="ECO:0000312" key="8">
    <source>
        <dbReference type="FlyBase" id="FBgn0053993"/>
    </source>
</evidence>
<evidence type="ECO:0000312" key="9">
    <source>
        <dbReference type="Proteomes" id="UP000000803"/>
    </source>
</evidence>
<proteinExistence type="evidence at protein level"/>
<comment type="function">
    <text evidence="3">Involved in the negative regulation of the Egfr/Ras signaling pathway (PubMed:34411095). During wing morphogenesis, may function redundantly with PVRAP to inhibit Egfr activity and prevent uncontrolled cell growth (PubMed:34411095).</text>
</comment>
<comment type="subunit">
    <text evidence="3">May interact (via SH2 domain) with Egfr (when phosphorylated).</text>
</comment>
<comment type="alternative products">
    <event type="alternative splicing"/>
    <isoform>
        <id>Q6NR09-1</id>
        <name evidence="8">A</name>
        <sequence type="displayed"/>
    </isoform>
    <isoform>
        <id>Q6NR09-2</id>
        <name evidence="8">B</name>
        <sequence type="described" ref="VSP_061376"/>
    </isoform>
</comment>
<comment type="tissue specificity">
    <text evidence="3">Detected along the wing margin, with high levels of expression in two stripes of cells on either side of the dorsal/ventral boundary and lower levels of expression in a small region at the anteroposterior boundary (at protein level) (PubMed:34411095). High levels of expression along two parallel stripes of cells on either side of the wing pouch dorsal/ventral boundary, and slightly lower levels of expression in a region either side of the anteroposterior boundary (PubMed:34411095). Also expressed in discrete regions of the wing imaginal disk outside of the pouch (PubMed:34411095). Expressed in eye imaginal disk photoreceptors with highest levels of expression in R7 photoreceptor cells (PubMed:34411095).</text>
</comment>
<comment type="disruption phenotype">
    <text evidence="3">RNAi-mediated knockdown in adults does not result in a visible phenotype (PubMed:34411095). However, simultaneous knockdown of EGFRAP (CG33993) and PVRAP results in the development of ectopic sensory organs in the notum and blisters in the wings (PubMed:34411095). RNAi-mediated knockdown in the posterior compartment of the wing disks, increases expression of PEK (PubMed:34411095).</text>
</comment>
<reference evidence="9" key="1">
    <citation type="journal article" date="2000" name="Science">
        <title>The genome sequence of Drosophila melanogaster.</title>
        <authorList>
            <person name="Adams M.D."/>
            <person name="Celniker S.E."/>
            <person name="Holt R.A."/>
            <person name="Evans C.A."/>
            <person name="Gocayne J.D."/>
            <person name="Amanatides P.G."/>
            <person name="Scherer S.E."/>
            <person name="Li P.W."/>
            <person name="Hoskins R.A."/>
            <person name="Galle R.F."/>
            <person name="George R.A."/>
            <person name="Lewis S.E."/>
            <person name="Richards S."/>
            <person name="Ashburner M."/>
            <person name="Henderson S.N."/>
            <person name="Sutton G.G."/>
            <person name="Wortman J.R."/>
            <person name="Yandell M.D."/>
            <person name="Zhang Q."/>
            <person name="Chen L.X."/>
            <person name="Brandon R.C."/>
            <person name="Rogers Y.-H.C."/>
            <person name="Blazej R.G."/>
            <person name="Champe M."/>
            <person name="Pfeiffer B.D."/>
            <person name="Wan K.H."/>
            <person name="Doyle C."/>
            <person name="Baxter E.G."/>
            <person name="Helt G."/>
            <person name="Nelson C.R."/>
            <person name="Miklos G.L.G."/>
            <person name="Abril J.F."/>
            <person name="Agbayani A."/>
            <person name="An H.-J."/>
            <person name="Andrews-Pfannkoch C."/>
            <person name="Baldwin D."/>
            <person name="Ballew R.M."/>
            <person name="Basu A."/>
            <person name="Baxendale J."/>
            <person name="Bayraktaroglu L."/>
            <person name="Beasley E.M."/>
            <person name="Beeson K.Y."/>
            <person name="Benos P.V."/>
            <person name="Berman B.P."/>
            <person name="Bhandari D."/>
            <person name="Bolshakov S."/>
            <person name="Borkova D."/>
            <person name="Botchan M.R."/>
            <person name="Bouck J."/>
            <person name="Brokstein P."/>
            <person name="Brottier P."/>
            <person name="Burtis K.C."/>
            <person name="Busam D.A."/>
            <person name="Butler H."/>
            <person name="Cadieu E."/>
            <person name="Center A."/>
            <person name="Chandra I."/>
            <person name="Cherry J.M."/>
            <person name="Cawley S."/>
            <person name="Dahlke C."/>
            <person name="Davenport L.B."/>
            <person name="Davies P."/>
            <person name="de Pablos B."/>
            <person name="Delcher A."/>
            <person name="Deng Z."/>
            <person name="Mays A.D."/>
            <person name="Dew I."/>
            <person name="Dietz S.M."/>
            <person name="Dodson K."/>
            <person name="Doup L.E."/>
            <person name="Downes M."/>
            <person name="Dugan-Rocha S."/>
            <person name="Dunkov B.C."/>
            <person name="Dunn P."/>
            <person name="Durbin K.J."/>
            <person name="Evangelista C.C."/>
            <person name="Ferraz C."/>
            <person name="Ferriera S."/>
            <person name="Fleischmann W."/>
            <person name="Fosler C."/>
            <person name="Gabrielian A.E."/>
            <person name="Garg N.S."/>
            <person name="Gelbart W.M."/>
            <person name="Glasser K."/>
            <person name="Glodek A."/>
            <person name="Gong F."/>
            <person name="Gorrell J.H."/>
            <person name="Gu Z."/>
            <person name="Guan P."/>
            <person name="Harris M."/>
            <person name="Harris N.L."/>
            <person name="Harvey D.A."/>
            <person name="Heiman T.J."/>
            <person name="Hernandez J.R."/>
            <person name="Houck J."/>
            <person name="Hostin D."/>
            <person name="Houston K.A."/>
            <person name="Howland T.J."/>
            <person name="Wei M.-H."/>
            <person name="Ibegwam C."/>
            <person name="Jalali M."/>
            <person name="Kalush F."/>
            <person name="Karpen G.H."/>
            <person name="Ke Z."/>
            <person name="Kennison J.A."/>
            <person name="Ketchum K.A."/>
            <person name="Kimmel B.E."/>
            <person name="Kodira C.D."/>
            <person name="Kraft C.L."/>
            <person name="Kravitz S."/>
            <person name="Kulp D."/>
            <person name="Lai Z."/>
            <person name="Lasko P."/>
            <person name="Lei Y."/>
            <person name="Levitsky A.A."/>
            <person name="Li J.H."/>
            <person name="Li Z."/>
            <person name="Liang Y."/>
            <person name="Lin X."/>
            <person name="Liu X."/>
            <person name="Mattei B."/>
            <person name="McIntosh T.C."/>
            <person name="McLeod M.P."/>
            <person name="McPherson D."/>
            <person name="Merkulov G."/>
            <person name="Milshina N.V."/>
            <person name="Mobarry C."/>
            <person name="Morris J."/>
            <person name="Moshrefi A."/>
            <person name="Mount S.M."/>
            <person name="Moy M."/>
            <person name="Murphy B."/>
            <person name="Murphy L."/>
            <person name="Muzny D.M."/>
            <person name="Nelson D.L."/>
            <person name="Nelson D.R."/>
            <person name="Nelson K.A."/>
            <person name="Nixon K."/>
            <person name="Nusskern D.R."/>
            <person name="Pacleb J.M."/>
            <person name="Palazzolo M."/>
            <person name="Pittman G.S."/>
            <person name="Pan S."/>
            <person name="Pollard J."/>
            <person name="Puri V."/>
            <person name="Reese M.G."/>
            <person name="Reinert K."/>
            <person name="Remington K."/>
            <person name="Saunders R.D.C."/>
            <person name="Scheeler F."/>
            <person name="Shen H."/>
            <person name="Shue B.C."/>
            <person name="Siden-Kiamos I."/>
            <person name="Simpson M."/>
            <person name="Skupski M.P."/>
            <person name="Smith T.J."/>
            <person name="Spier E."/>
            <person name="Spradling A.C."/>
            <person name="Stapleton M."/>
            <person name="Strong R."/>
            <person name="Sun E."/>
            <person name="Svirskas R."/>
            <person name="Tector C."/>
            <person name="Turner R."/>
            <person name="Venter E."/>
            <person name="Wang A.H."/>
            <person name="Wang X."/>
            <person name="Wang Z.-Y."/>
            <person name="Wassarman D.A."/>
            <person name="Weinstock G.M."/>
            <person name="Weissenbach J."/>
            <person name="Williams S.M."/>
            <person name="Woodage T."/>
            <person name="Worley K.C."/>
            <person name="Wu D."/>
            <person name="Yang S."/>
            <person name="Yao Q.A."/>
            <person name="Ye J."/>
            <person name="Yeh R.-F."/>
            <person name="Zaveri J.S."/>
            <person name="Zhan M."/>
            <person name="Zhang G."/>
            <person name="Zhao Q."/>
            <person name="Zheng L."/>
            <person name="Zheng X.H."/>
            <person name="Zhong F.N."/>
            <person name="Zhong W."/>
            <person name="Zhou X."/>
            <person name="Zhu S.C."/>
            <person name="Zhu X."/>
            <person name="Smith H.O."/>
            <person name="Gibbs R.A."/>
            <person name="Myers E.W."/>
            <person name="Rubin G.M."/>
            <person name="Venter J.C."/>
        </authorList>
    </citation>
    <scope>NUCLEOTIDE SEQUENCE [LARGE SCALE GENOMIC DNA]</scope>
    <source>
        <strain evidence="9">Berkeley</strain>
    </source>
</reference>
<reference evidence="9" key="2">
    <citation type="journal article" date="2002" name="Genome Biol.">
        <title>Annotation of the Drosophila melanogaster euchromatic genome: a systematic review.</title>
        <authorList>
            <person name="Misra S."/>
            <person name="Crosby M.A."/>
            <person name="Mungall C.J."/>
            <person name="Matthews B.B."/>
            <person name="Campbell K.S."/>
            <person name="Hradecky P."/>
            <person name="Huang Y."/>
            <person name="Kaminker J.S."/>
            <person name="Millburn G.H."/>
            <person name="Prochnik S.E."/>
            <person name="Smith C.D."/>
            <person name="Tupy J.L."/>
            <person name="Whitfield E.J."/>
            <person name="Bayraktaroglu L."/>
            <person name="Berman B.P."/>
            <person name="Bettencourt B.R."/>
            <person name="Celniker S.E."/>
            <person name="de Grey A.D.N.J."/>
            <person name="Drysdale R.A."/>
            <person name="Harris N.L."/>
            <person name="Richter J."/>
            <person name="Russo S."/>
            <person name="Schroeder A.J."/>
            <person name="Shu S.Q."/>
            <person name="Stapleton M."/>
            <person name="Yamada C."/>
            <person name="Ashburner M."/>
            <person name="Gelbart W.M."/>
            <person name="Rubin G.M."/>
            <person name="Lewis S.E."/>
        </authorList>
    </citation>
    <scope>GENOME REANNOTATION</scope>
    <source>
        <strain evidence="9">Berkeley</strain>
    </source>
</reference>
<reference evidence="6 7" key="3">
    <citation type="submission" date="2006-08" db="EMBL/GenBank/DDBJ databases">
        <authorList>
            <person name="Celniker S."/>
            <person name="Carlson J."/>
            <person name="Wan K."/>
            <person name="Frise E."/>
            <person name="Hoskins R."/>
            <person name="Park S."/>
            <person name="Svirskas R."/>
            <person name="Rubin G."/>
            <person name="Stapleton M."/>
            <person name="Chavez C."/>
            <person name="George R."/>
            <person name="Pacleb J."/>
            <person name="Yu C."/>
        </authorList>
    </citation>
    <scope>NUCLEOTIDE SEQUENCE [LARGE SCALE MRNA] (ISOFORMS A AND B)</scope>
    <source>
        <tissue evidence="6">Embryo</tissue>
    </source>
</reference>
<reference evidence="5" key="4">
    <citation type="journal article" date="2021" name="PLoS Genet.">
        <title>EGFRAP encodes a new negative regulator of the EGFR acting in both normal and oncogenic EGFR/Ras-driven tissue morphogenesis.</title>
        <authorList>
            <person name="Soler Beatty J."/>
            <person name="Molnar C."/>
            <person name="Luque C.M."/>
            <person name="de Celis J.F."/>
            <person name="Martin-Bermudo M.D."/>
        </authorList>
    </citation>
    <scope>FUNCTION</scope>
    <scope>TISSUE SPECIFICITY</scope>
    <scope>DISRUPTION PHENOTYPE</scope>
</reference>
<feature type="chain" id="PRO_0000454710" description="EGFR adapter protein">
    <location>
        <begin position="1"/>
        <end position="421"/>
    </location>
</feature>
<feature type="domain" description="SH2" evidence="1">
    <location>
        <begin position="286"/>
        <end position="379"/>
    </location>
</feature>
<feature type="region of interest" description="Disordered" evidence="2">
    <location>
        <begin position="18"/>
        <end position="94"/>
    </location>
</feature>
<feature type="region of interest" description="Disordered" evidence="2">
    <location>
        <begin position="109"/>
        <end position="154"/>
    </location>
</feature>
<feature type="region of interest" description="Disordered" evidence="2">
    <location>
        <begin position="173"/>
        <end position="194"/>
    </location>
</feature>
<feature type="region of interest" description="Disordered" evidence="2">
    <location>
        <begin position="372"/>
        <end position="396"/>
    </location>
</feature>
<feature type="compositionally biased region" description="Low complexity" evidence="2">
    <location>
        <begin position="21"/>
        <end position="30"/>
    </location>
</feature>
<feature type="compositionally biased region" description="Basic residues" evidence="2">
    <location>
        <begin position="62"/>
        <end position="89"/>
    </location>
</feature>
<feature type="compositionally biased region" description="Basic and acidic residues" evidence="2">
    <location>
        <begin position="109"/>
        <end position="120"/>
    </location>
</feature>
<feature type="compositionally biased region" description="Low complexity" evidence="2">
    <location>
        <begin position="181"/>
        <end position="194"/>
    </location>
</feature>
<feature type="splice variant" id="VSP_061376" description="In isoform B." evidence="5">
    <location>
        <begin position="1"/>
        <end position="163"/>
    </location>
</feature>
<dbReference type="EMBL" id="AE014296">
    <property type="protein sequence ID" value="ABC66161.1"/>
    <property type="molecule type" value="Genomic_DNA"/>
</dbReference>
<dbReference type="EMBL" id="AE014296">
    <property type="protein sequence ID" value="ACZ94623.1"/>
    <property type="molecule type" value="Genomic_DNA"/>
</dbReference>
<dbReference type="EMBL" id="BT010275">
    <property type="protein sequence ID" value="AAQ23593.1"/>
    <property type="molecule type" value="mRNA"/>
</dbReference>
<dbReference type="EMBL" id="BT024349">
    <property type="protein sequence ID" value="ABC86411.1"/>
    <property type="molecule type" value="mRNA"/>
</dbReference>
<dbReference type="RefSeq" id="NP_001033991.1">
    <molecule id="Q6NR09-1"/>
    <property type="nucleotide sequence ID" value="NM_001038902.3"/>
</dbReference>
<dbReference type="RefSeq" id="NP_001163352.1">
    <molecule id="Q6NR09-2"/>
    <property type="nucleotide sequence ID" value="NM_001169881.1"/>
</dbReference>
<dbReference type="SMR" id="Q6NR09"/>
<dbReference type="FunCoup" id="Q6NR09">
    <property type="interactions" value="1"/>
</dbReference>
<dbReference type="IntAct" id="Q6NR09">
    <property type="interactions" value="2"/>
</dbReference>
<dbReference type="GlyGen" id="Q6NR09">
    <property type="glycosylation" value="1 site, 1 O-linked glycan (1 site)"/>
</dbReference>
<dbReference type="PaxDb" id="7227-FBpp0099403"/>
<dbReference type="DNASU" id="3885637"/>
<dbReference type="EnsemblMetazoa" id="FBtr0100046">
    <molecule id="Q6NR09-1"/>
    <property type="protein sequence ID" value="FBpp0099403"/>
    <property type="gene ID" value="FBgn0053993"/>
</dbReference>
<dbReference type="EnsemblMetazoa" id="FBtr0301034">
    <molecule id="Q6NR09-2"/>
    <property type="protein sequence ID" value="FBpp0290256"/>
    <property type="gene ID" value="FBgn0053993"/>
</dbReference>
<dbReference type="GeneID" id="3885637"/>
<dbReference type="KEGG" id="dme:Dmel_CG33993"/>
<dbReference type="UCSC" id="CG33993-RA">
    <molecule id="Q6NR09-1"/>
    <property type="organism name" value="d. melanogaster"/>
</dbReference>
<dbReference type="AGR" id="FB:FBgn0053993"/>
<dbReference type="CTD" id="3885637"/>
<dbReference type="FlyBase" id="FBgn0053993">
    <property type="gene designation" value="Egfrap"/>
</dbReference>
<dbReference type="VEuPathDB" id="VectorBase:FBgn0053993"/>
<dbReference type="eggNOG" id="ENOG502QR6J">
    <property type="taxonomic scope" value="Eukaryota"/>
</dbReference>
<dbReference type="GeneTree" id="ENSGT00390000007997"/>
<dbReference type="HOGENOM" id="CLU_031830_0_0_1"/>
<dbReference type="InParanoid" id="Q6NR09"/>
<dbReference type="OMA" id="AMQDIRL"/>
<dbReference type="OrthoDB" id="10013007at2759"/>
<dbReference type="PhylomeDB" id="Q6NR09"/>
<dbReference type="BioGRID-ORCS" id="3885637">
    <property type="hits" value="0 hits in 1 CRISPR screen"/>
</dbReference>
<dbReference type="GenomeRNAi" id="3885637"/>
<dbReference type="PRO" id="PR:Q6NR09"/>
<dbReference type="Proteomes" id="UP000000803">
    <property type="component" value="Chromosome 3L"/>
</dbReference>
<dbReference type="Bgee" id="FBgn0053993">
    <property type="expression patterns" value="Expressed in adult Malpighian tubule principal cell of lower segment in Malpighian tubule and 54 other cell types or tissues"/>
</dbReference>
<dbReference type="ExpressionAtlas" id="Q6NR09">
    <property type="expression patterns" value="baseline and differential"/>
</dbReference>
<dbReference type="GO" id="GO:0045179">
    <property type="term" value="C:apical cortex"/>
    <property type="evidence" value="ECO:0000314"/>
    <property type="project" value="FlyBase"/>
</dbReference>
<dbReference type="GO" id="GO:0005925">
    <property type="term" value="C:focal adhesion"/>
    <property type="evidence" value="ECO:0000318"/>
    <property type="project" value="GO_Central"/>
</dbReference>
<dbReference type="GO" id="GO:0030971">
    <property type="term" value="F:receptor tyrosine kinase binding"/>
    <property type="evidence" value="ECO:0000315"/>
    <property type="project" value="FlyBase"/>
</dbReference>
<dbReference type="GO" id="GO:0042059">
    <property type="term" value="P:negative regulation of epidermal growth factor receptor signaling pathway"/>
    <property type="evidence" value="ECO:0000316"/>
    <property type="project" value="FlyBase"/>
</dbReference>
<dbReference type="CDD" id="cd00173">
    <property type="entry name" value="SH2"/>
    <property type="match status" value="1"/>
</dbReference>
<dbReference type="Gene3D" id="3.30.505.10">
    <property type="entry name" value="SH2 domain"/>
    <property type="match status" value="1"/>
</dbReference>
<dbReference type="InterPro" id="IPR000980">
    <property type="entry name" value="SH2"/>
</dbReference>
<dbReference type="InterPro" id="IPR036860">
    <property type="entry name" value="SH2_dom_sf"/>
</dbReference>
<dbReference type="PANTHER" id="PTHR15832:SF2">
    <property type="entry name" value="SH2 DOMAIN-CONTAINING PROTEIN"/>
    <property type="match status" value="1"/>
</dbReference>
<dbReference type="PANTHER" id="PTHR15832">
    <property type="entry name" value="SHC (SRC HOMOLOGY DOMAIN C-TERMINAL) ADAPTOR HOMOLOG"/>
    <property type="match status" value="1"/>
</dbReference>
<dbReference type="Pfam" id="PF00017">
    <property type="entry name" value="SH2"/>
    <property type="match status" value="1"/>
</dbReference>
<dbReference type="PRINTS" id="PR00401">
    <property type="entry name" value="SH2DOMAIN"/>
</dbReference>
<dbReference type="SMART" id="SM00252">
    <property type="entry name" value="SH2"/>
    <property type="match status" value="1"/>
</dbReference>
<dbReference type="SUPFAM" id="SSF55550">
    <property type="entry name" value="SH2 domain"/>
    <property type="match status" value="1"/>
</dbReference>
<dbReference type="PROSITE" id="PS50001">
    <property type="entry name" value="SH2"/>
    <property type="match status" value="1"/>
</dbReference>
<organism evidence="9">
    <name type="scientific">Drosophila melanogaster</name>
    <name type="common">Fruit fly</name>
    <dbReference type="NCBI Taxonomy" id="7227"/>
    <lineage>
        <taxon>Eukaryota</taxon>
        <taxon>Metazoa</taxon>
        <taxon>Ecdysozoa</taxon>
        <taxon>Arthropoda</taxon>
        <taxon>Hexapoda</taxon>
        <taxon>Insecta</taxon>
        <taxon>Pterygota</taxon>
        <taxon>Neoptera</taxon>
        <taxon>Endopterygota</taxon>
        <taxon>Diptera</taxon>
        <taxon>Brachycera</taxon>
        <taxon>Muscomorpha</taxon>
        <taxon>Ephydroidea</taxon>
        <taxon>Drosophilidae</taxon>
        <taxon>Drosophila</taxon>
        <taxon>Sophophora</taxon>
    </lineage>
</organism>